<accession>P0CP23</accession>
<accession>Q55PW8</accession>
<accession>Q5KDJ2</accession>
<keyword id="KW-0963">Cytoplasm</keyword>
<keyword id="KW-0269">Exonuclease</keyword>
<keyword id="KW-0378">Hydrolase</keyword>
<keyword id="KW-0433">Leucine-rich repeat</keyword>
<keyword id="KW-0460">Magnesium</keyword>
<keyword id="KW-0479">Metal-binding</keyword>
<keyword id="KW-0540">Nuclease</keyword>
<keyword id="KW-0539">Nucleus</keyword>
<keyword id="KW-0677">Repeat</keyword>
<keyword id="KW-0694">RNA-binding</keyword>
<keyword id="KW-0804">Transcription</keyword>
<keyword id="KW-0805">Transcription regulation</keyword>
<feature type="chain" id="PRO_0000410168" description="CCR4-Not complex 3'-5'-exoribonuclease subunit Ccr4">
    <location>
        <begin position="1"/>
        <end position="744"/>
    </location>
</feature>
<feature type="repeat" description="LRR 1">
    <location>
        <begin position="231"/>
        <end position="254"/>
    </location>
</feature>
<feature type="repeat" description="LRR 2">
    <location>
        <begin position="255"/>
        <end position="277"/>
    </location>
</feature>
<feature type="repeat" description="LRR 3">
    <location>
        <begin position="279"/>
        <end position="300"/>
    </location>
</feature>
<feature type="repeat" description="LRR 4">
    <location>
        <begin position="301"/>
        <end position="326"/>
    </location>
</feature>
<feature type="region of interest" description="Disordered" evidence="4">
    <location>
        <begin position="1"/>
        <end position="100"/>
    </location>
</feature>
<feature type="region of interest" description="Disordered" evidence="4">
    <location>
        <begin position="132"/>
        <end position="235"/>
    </location>
</feature>
<feature type="compositionally biased region" description="Polar residues" evidence="4">
    <location>
        <begin position="1"/>
        <end position="16"/>
    </location>
</feature>
<feature type="compositionally biased region" description="Polar residues" evidence="4">
    <location>
        <begin position="29"/>
        <end position="43"/>
    </location>
</feature>
<feature type="compositionally biased region" description="Gly residues" evidence="4">
    <location>
        <begin position="86"/>
        <end position="100"/>
    </location>
</feature>
<feature type="binding site" evidence="2">
    <location>
        <position position="440"/>
    </location>
    <ligand>
        <name>Mg(2+)</name>
        <dbReference type="ChEBI" id="CHEBI:18420"/>
    </ligand>
</feature>
<organism>
    <name type="scientific">Cryptococcus neoformans var. neoformans serotype D (strain B-3501A)</name>
    <name type="common">Filobasidiella neoformans</name>
    <dbReference type="NCBI Taxonomy" id="283643"/>
    <lineage>
        <taxon>Eukaryota</taxon>
        <taxon>Fungi</taxon>
        <taxon>Dikarya</taxon>
        <taxon>Basidiomycota</taxon>
        <taxon>Agaricomycotina</taxon>
        <taxon>Tremellomycetes</taxon>
        <taxon>Tremellales</taxon>
        <taxon>Cryptococcaceae</taxon>
        <taxon>Cryptococcus</taxon>
        <taxon>Cryptococcus neoformans species complex</taxon>
    </lineage>
</organism>
<protein>
    <recommendedName>
        <fullName evidence="5">CCR4-Not complex 3'-5'-exoribonuclease subunit Ccr4</fullName>
        <ecNumber>3.1.13.4</ecNumber>
    </recommendedName>
    <alternativeName>
        <fullName>Carbon catabolite repressor protein 4</fullName>
    </alternativeName>
    <alternativeName>
        <fullName>Cytoplasmic deadenylase</fullName>
    </alternativeName>
    <alternativeName>
        <fullName>Glucose-repressible alcohol dehydrogenase transcriptional effector</fullName>
    </alternativeName>
</protein>
<gene>
    <name type="primary">CCR4</name>
    <name type="ordered locus">CNBG0960</name>
</gene>
<dbReference type="EC" id="3.1.13.4"/>
<dbReference type="EMBL" id="AAEY01000036">
    <property type="protein sequence ID" value="EAL19803.1"/>
    <property type="molecule type" value="Genomic_DNA"/>
</dbReference>
<dbReference type="RefSeq" id="XP_774450.1">
    <property type="nucleotide sequence ID" value="XM_769357.1"/>
</dbReference>
<dbReference type="SMR" id="P0CP23"/>
<dbReference type="GeneID" id="4937128"/>
<dbReference type="KEGG" id="cnb:CNBG0960"/>
<dbReference type="VEuPathDB" id="FungiDB:CNBG0960"/>
<dbReference type="HOGENOM" id="CLU_016428_4_0_1"/>
<dbReference type="OrthoDB" id="5551at5206"/>
<dbReference type="GO" id="GO:0030015">
    <property type="term" value="C:CCR4-NOT core complex"/>
    <property type="evidence" value="ECO:0007669"/>
    <property type="project" value="EnsemblFungi"/>
</dbReference>
<dbReference type="GO" id="GO:0005634">
    <property type="term" value="C:nucleus"/>
    <property type="evidence" value="ECO:0007669"/>
    <property type="project" value="UniProtKB-SubCell"/>
</dbReference>
<dbReference type="GO" id="GO:0000932">
    <property type="term" value="C:P-body"/>
    <property type="evidence" value="ECO:0007669"/>
    <property type="project" value="EnsemblFungi"/>
</dbReference>
<dbReference type="GO" id="GO:0046872">
    <property type="term" value="F:metal ion binding"/>
    <property type="evidence" value="ECO:0007669"/>
    <property type="project" value="UniProtKB-KW"/>
</dbReference>
<dbReference type="GO" id="GO:0004535">
    <property type="term" value="F:poly(A)-specific ribonuclease activity"/>
    <property type="evidence" value="ECO:0007669"/>
    <property type="project" value="UniProtKB-EC"/>
</dbReference>
<dbReference type="GO" id="GO:0003723">
    <property type="term" value="F:RNA binding"/>
    <property type="evidence" value="ECO:0007669"/>
    <property type="project" value="UniProtKB-KW"/>
</dbReference>
<dbReference type="GO" id="GO:0000289">
    <property type="term" value="P:nuclear-transcribed mRNA poly(A) tail shortening"/>
    <property type="evidence" value="ECO:0007669"/>
    <property type="project" value="EnsemblFungi"/>
</dbReference>
<dbReference type="CDD" id="cd09097">
    <property type="entry name" value="Deadenylase_CCR4"/>
    <property type="match status" value="1"/>
</dbReference>
<dbReference type="FunFam" id="3.60.10.10:FF:000002">
    <property type="entry name" value="CCR4-NOT transcription complex subunit 6 like"/>
    <property type="match status" value="1"/>
</dbReference>
<dbReference type="FunFam" id="3.80.10.10:FF:000705">
    <property type="entry name" value="Glucose-repressible alcohol dehydrogenase transcriptional effector"/>
    <property type="match status" value="1"/>
</dbReference>
<dbReference type="Gene3D" id="3.60.10.10">
    <property type="entry name" value="Endonuclease/exonuclease/phosphatase"/>
    <property type="match status" value="1"/>
</dbReference>
<dbReference type="Gene3D" id="3.80.10.10">
    <property type="entry name" value="Ribonuclease Inhibitor"/>
    <property type="match status" value="1"/>
</dbReference>
<dbReference type="InterPro" id="IPR050410">
    <property type="entry name" value="CCR4/nocturin_mRNA_transcr"/>
</dbReference>
<dbReference type="InterPro" id="IPR036691">
    <property type="entry name" value="Endo/exonu/phosph_ase_sf"/>
</dbReference>
<dbReference type="InterPro" id="IPR005135">
    <property type="entry name" value="Endo/exonuclease/phosphatase"/>
</dbReference>
<dbReference type="InterPro" id="IPR001611">
    <property type="entry name" value="Leu-rich_rpt"/>
</dbReference>
<dbReference type="InterPro" id="IPR003591">
    <property type="entry name" value="Leu-rich_rpt_typical-subtyp"/>
</dbReference>
<dbReference type="InterPro" id="IPR032675">
    <property type="entry name" value="LRR_dom_sf"/>
</dbReference>
<dbReference type="PANTHER" id="PTHR12121">
    <property type="entry name" value="CARBON CATABOLITE REPRESSOR PROTEIN 4"/>
    <property type="match status" value="1"/>
</dbReference>
<dbReference type="PANTHER" id="PTHR12121:SF100">
    <property type="entry name" value="POLY(A)-SPECIFIC RIBONUCLEASE"/>
    <property type="match status" value="1"/>
</dbReference>
<dbReference type="Pfam" id="PF03372">
    <property type="entry name" value="Exo_endo_phos"/>
    <property type="match status" value="1"/>
</dbReference>
<dbReference type="Pfam" id="PF13855">
    <property type="entry name" value="LRR_8"/>
    <property type="match status" value="1"/>
</dbReference>
<dbReference type="SMART" id="SM00369">
    <property type="entry name" value="LRR_TYP"/>
    <property type="match status" value="3"/>
</dbReference>
<dbReference type="SUPFAM" id="SSF56219">
    <property type="entry name" value="DNase I-like"/>
    <property type="match status" value="1"/>
</dbReference>
<dbReference type="SUPFAM" id="SSF52058">
    <property type="entry name" value="L domain-like"/>
    <property type="match status" value="1"/>
</dbReference>
<name>CCR4_CRYNB</name>
<reference key="1">
    <citation type="journal article" date="2005" name="Science">
        <title>The genome of the basidiomycetous yeast and human pathogen Cryptococcus neoformans.</title>
        <authorList>
            <person name="Loftus B.J."/>
            <person name="Fung E."/>
            <person name="Roncaglia P."/>
            <person name="Rowley D."/>
            <person name="Amedeo P."/>
            <person name="Bruno D."/>
            <person name="Vamathevan J."/>
            <person name="Miranda M."/>
            <person name="Anderson I.J."/>
            <person name="Fraser J.A."/>
            <person name="Allen J.E."/>
            <person name="Bosdet I.E."/>
            <person name="Brent M.R."/>
            <person name="Chiu R."/>
            <person name="Doering T.L."/>
            <person name="Donlin M.J."/>
            <person name="D'Souza C.A."/>
            <person name="Fox D.S."/>
            <person name="Grinberg V."/>
            <person name="Fu J."/>
            <person name="Fukushima M."/>
            <person name="Haas B.J."/>
            <person name="Huang J.C."/>
            <person name="Janbon G."/>
            <person name="Jones S.J.M."/>
            <person name="Koo H.L."/>
            <person name="Krzywinski M.I."/>
            <person name="Kwon-Chung K.J."/>
            <person name="Lengeler K.B."/>
            <person name="Maiti R."/>
            <person name="Marra M.A."/>
            <person name="Marra R.E."/>
            <person name="Mathewson C.A."/>
            <person name="Mitchell T.G."/>
            <person name="Pertea M."/>
            <person name="Riggs F.R."/>
            <person name="Salzberg S.L."/>
            <person name="Schein J.E."/>
            <person name="Shvartsbeyn A."/>
            <person name="Shin H."/>
            <person name="Shumway M."/>
            <person name="Specht C.A."/>
            <person name="Suh B.B."/>
            <person name="Tenney A."/>
            <person name="Utterback T.R."/>
            <person name="Wickes B.L."/>
            <person name="Wortman J.R."/>
            <person name="Wye N.H."/>
            <person name="Kronstad J.W."/>
            <person name="Lodge J.K."/>
            <person name="Heitman J."/>
            <person name="Davis R.W."/>
            <person name="Fraser C.M."/>
            <person name="Hyman R.W."/>
        </authorList>
    </citation>
    <scope>NUCLEOTIDE SEQUENCE [LARGE SCALE GENOMIC DNA]</scope>
    <source>
        <strain>B-3501A</strain>
    </source>
</reference>
<evidence type="ECO:0000250" key="1"/>
<evidence type="ECO:0000250" key="2">
    <source>
        <dbReference type="UniProtKB" id="O95551"/>
    </source>
</evidence>
<evidence type="ECO:0000250" key="3">
    <source>
        <dbReference type="UniProtKB" id="P31384"/>
    </source>
</evidence>
<evidence type="ECO:0000256" key="4">
    <source>
        <dbReference type="SAM" id="MobiDB-lite"/>
    </source>
</evidence>
<evidence type="ECO:0000305" key="5"/>
<sequence>MFYPHHQSQQSTTTNPSKHHDSQDVRLPGTSSWSRHPSHPSFTPSLPMPSPSGYPPLGSGYPPGGHHHPNVNVHSGIHGPHPSFGSGMGGNGGMGHGQGFGMGMFQNGVQTSPPRGEPVPMTSHWQTQMMRAEASRSASSPHHRARAAAISSRATNKPAAVPIVDPNNRPSSSYGTNGLHRKNASSVFNGEPTGTPPLSDPSLTPAQNPAEPATPAPVAGQTESKDEEKPNEPWTGLDLGGIRLKRLSTALFSFTHVTSLYINHNALTSIPSAISSLRQLTLLDATGNELSTIPSEIGVLSKLKDLLLFDNNLTTLPFELGTLYQLDCLGIDGNPMNADYRKKLVEDGTRGLITYLRDHAPPPPPPPERQWIDLETDVDTPTSGKQESFSVLTYNILCASFAPATTYSYTPSWALDWDYRKRLLLEEIVTASADVVCLQEIDCKQYADYFYPMLKKEGYEGQHYPRSRAKTMSVDEQKLVDGCATFWKEEKFRLVETQVIEFNQLALQKTDMRTEDMFNRVMSRDNIAVVAALEFRASGGRLLVANSHIYWDHRYRDVKLVQIGMLMEELEKIVEQFSRYPVKLDTDPEYNNGKPPKYERSEKGRDIPLIMCVDLNSFSGSAVYDYLSSGSIPGDHEDFMSHLYGRYTASGLKHHLGLRSACAGIGEMRMTNFTPTFAAAIDYVFYTPRTMKVTSVLGDVDKAYLDKTVGFPNAHFPSDHIPVFTQFRIKGHLDPLPLNGDPYH</sequence>
<proteinExistence type="inferred from homology"/>
<comment type="function">
    <text evidence="3">Acts as a catalytic component of the CCR4-NOT core complex, which in the nucleus seems to be a general transcription factor, and in the cytoplasm the major mRNA deadenylase involved in mRNA turnover (By similarity). Ccr4 has 3'-5' RNase activity with a strong preference for polyadenylated substrates and also low exonuclease activity towards single-stranded DNA (By similarity).</text>
</comment>
<comment type="catalytic activity">
    <reaction>
        <text>Exonucleolytic cleavage of poly(A) to 5'-AMP.</text>
        <dbReference type="EC" id="3.1.13.4"/>
    </reaction>
</comment>
<comment type="cofactor">
    <cofactor evidence="1">
        <name>Mg(2+)</name>
        <dbReference type="ChEBI" id="CHEBI:18420"/>
    </cofactor>
</comment>
<comment type="subcellular location">
    <subcellularLocation>
        <location evidence="1">Cytoplasm</location>
    </subcellularLocation>
    <subcellularLocation>
        <location evidence="1">Nucleus</location>
    </subcellularLocation>
</comment>
<comment type="similarity">
    <text evidence="5">Belongs to the CCR4/nocturin family.</text>
</comment>